<comment type="function">
    <text evidence="1">Key enzyme in folate metabolism. Catalyzes an essential reaction for de novo glycine and purine synthesis, and for DNA precursor synthesis (By similarity).</text>
</comment>
<comment type="catalytic activity">
    <reaction evidence="2">
        <text>(6S)-5,6,7,8-tetrahydrofolate + NADP(+) = 7,8-dihydrofolate + NADPH + H(+)</text>
        <dbReference type="Rhea" id="RHEA:15009"/>
        <dbReference type="ChEBI" id="CHEBI:15378"/>
        <dbReference type="ChEBI" id="CHEBI:57451"/>
        <dbReference type="ChEBI" id="CHEBI:57453"/>
        <dbReference type="ChEBI" id="CHEBI:57783"/>
        <dbReference type="ChEBI" id="CHEBI:58349"/>
        <dbReference type="EC" id="1.5.1.3"/>
    </reaction>
</comment>
<comment type="pathway">
    <text>Cofactor biosynthesis; tetrahydrofolate biosynthesis; 5,6,7,8-tetrahydrofolate from 7,8-dihydrofolate: step 1/1.</text>
</comment>
<comment type="similarity">
    <text evidence="3">Belongs to the dihydrofolate reductase family.</text>
</comment>
<protein>
    <recommendedName>
        <fullName>Dihydrofolate reductase</fullName>
        <shortName>DHFR</shortName>
        <ecNumber>1.5.1.3</ecNumber>
    </recommendedName>
</protein>
<organism>
    <name type="scientific">Staphylococcus aureus (strain MW2)</name>
    <dbReference type="NCBI Taxonomy" id="196620"/>
    <lineage>
        <taxon>Bacteria</taxon>
        <taxon>Bacillati</taxon>
        <taxon>Bacillota</taxon>
        <taxon>Bacilli</taxon>
        <taxon>Bacillales</taxon>
        <taxon>Staphylococcaceae</taxon>
        <taxon>Staphylococcus</taxon>
    </lineage>
</organism>
<evidence type="ECO:0000250" key="1"/>
<evidence type="ECO:0000255" key="2">
    <source>
        <dbReference type="PROSITE-ProRule" id="PRU00660"/>
    </source>
</evidence>
<evidence type="ECO:0000305" key="3"/>
<accession>Q8NWQ9</accession>
<name>DYR_STAAW</name>
<gene>
    <name type="primary">folA</name>
    <name type="ordered locus">MW1316</name>
</gene>
<keyword id="KW-0521">NADP</keyword>
<keyword id="KW-0554">One-carbon metabolism</keyword>
<keyword id="KW-0560">Oxidoreductase</keyword>
<sequence>MTLSILVAHDLQRVIGFENQLPWHLPNDLKHVKKLSTGHTLVMGRKTFESIGKPLPNRRNVVLTSDTSFNVVGVDVIHSIEDIYQLPGHVFIFGGQILFEEMIDKVDDMYITVIEGKFRGDTFFPPYTFEDWEVASSVEGKLDEKNTIPHTFLHLIRKK</sequence>
<feature type="initiator methionine" description="Removed" evidence="1">
    <location>
        <position position="1"/>
    </location>
</feature>
<feature type="chain" id="PRO_0000186412" description="Dihydrofolate reductase">
    <location>
        <begin position="2"/>
        <end position="159"/>
    </location>
</feature>
<feature type="domain" description="DHFR" evidence="2">
    <location>
        <begin position="2"/>
        <end position="157"/>
    </location>
</feature>
<feature type="binding site" evidence="1">
    <location>
        <begin position="6"/>
        <end position="8"/>
    </location>
    <ligand>
        <name>substrate</name>
    </ligand>
</feature>
<feature type="binding site" evidence="1">
    <location>
        <begin position="7"/>
        <end position="8"/>
    </location>
    <ligand>
        <name>NADP(+)</name>
        <dbReference type="ChEBI" id="CHEBI:58349"/>
    </ligand>
</feature>
<feature type="binding site" evidence="1">
    <location>
        <begin position="15"/>
        <end position="20"/>
    </location>
    <ligand>
        <name>NADP(+)</name>
        <dbReference type="ChEBI" id="CHEBI:58349"/>
    </ligand>
</feature>
<feature type="binding site" evidence="1">
    <location>
        <position position="28"/>
    </location>
    <ligand>
        <name>substrate</name>
    </ligand>
</feature>
<feature type="binding site" evidence="1">
    <location>
        <begin position="44"/>
        <end position="47"/>
    </location>
    <ligand>
        <name>NADP(+)</name>
        <dbReference type="ChEBI" id="CHEBI:58349"/>
    </ligand>
</feature>
<feature type="binding site" evidence="1">
    <location>
        <position position="58"/>
    </location>
    <ligand>
        <name>substrate</name>
    </ligand>
</feature>
<feature type="binding site" evidence="1">
    <location>
        <begin position="63"/>
        <end position="66"/>
    </location>
    <ligand>
        <name>NADP(+)</name>
        <dbReference type="ChEBI" id="CHEBI:58349"/>
    </ligand>
</feature>
<feature type="binding site" evidence="1">
    <location>
        <begin position="93"/>
        <end position="98"/>
    </location>
    <ligand>
        <name>NADP(+)</name>
        <dbReference type="ChEBI" id="CHEBI:58349"/>
    </ligand>
</feature>
<feature type="binding site" evidence="1">
    <location>
        <position position="112"/>
    </location>
    <ligand>
        <name>substrate</name>
    </ligand>
</feature>
<reference key="1">
    <citation type="journal article" date="2002" name="Lancet">
        <title>Genome and virulence determinants of high virulence community-acquired MRSA.</title>
        <authorList>
            <person name="Baba T."/>
            <person name="Takeuchi F."/>
            <person name="Kuroda M."/>
            <person name="Yuzawa H."/>
            <person name="Aoki K."/>
            <person name="Oguchi A."/>
            <person name="Nagai Y."/>
            <person name="Iwama N."/>
            <person name="Asano K."/>
            <person name="Naimi T."/>
            <person name="Kuroda H."/>
            <person name="Cui L."/>
            <person name="Yamamoto K."/>
            <person name="Hiramatsu K."/>
        </authorList>
    </citation>
    <scope>NUCLEOTIDE SEQUENCE [LARGE SCALE GENOMIC DNA]</scope>
    <source>
        <strain>MW2</strain>
    </source>
</reference>
<proteinExistence type="inferred from homology"/>
<dbReference type="EC" id="1.5.1.3"/>
<dbReference type="EMBL" id="BA000033">
    <property type="protein sequence ID" value="BAB95181.1"/>
    <property type="molecule type" value="Genomic_DNA"/>
</dbReference>
<dbReference type="RefSeq" id="WP_000175752.1">
    <property type="nucleotide sequence ID" value="NC_003923.1"/>
</dbReference>
<dbReference type="SMR" id="Q8NWQ9"/>
<dbReference type="BindingDB" id="Q8NWQ9"/>
<dbReference type="KEGG" id="sam:MW1316"/>
<dbReference type="HOGENOM" id="CLU_043966_5_1_9"/>
<dbReference type="UniPathway" id="UPA00077">
    <property type="reaction ID" value="UER00158"/>
</dbReference>
<dbReference type="GO" id="GO:0005829">
    <property type="term" value="C:cytosol"/>
    <property type="evidence" value="ECO:0007669"/>
    <property type="project" value="TreeGrafter"/>
</dbReference>
<dbReference type="GO" id="GO:0004146">
    <property type="term" value="F:dihydrofolate reductase activity"/>
    <property type="evidence" value="ECO:0007669"/>
    <property type="project" value="UniProtKB-EC"/>
</dbReference>
<dbReference type="GO" id="GO:0050661">
    <property type="term" value="F:NADP binding"/>
    <property type="evidence" value="ECO:0007669"/>
    <property type="project" value="InterPro"/>
</dbReference>
<dbReference type="GO" id="GO:0046452">
    <property type="term" value="P:dihydrofolate metabolic process"/>
    <property type="evidence" value="ECO:0007669"/>
    <property type="project" value="TreeGrafter"/>
</dbReference>
<dbReference type="GO" id="GO:0046655">
    <property type="term" value="P:folic acid metabolic process"/>
    <property type="evidence" value="ECO:0007669"/>
    <property type="project" value="TreeGrafter"/>
</dbReference>
<dbReference type="GO" id="GO:0006730">
    <property type="term" value="P:one-carbon metabolic process"/>
    <property type="evidence" value="ECO:0007669"/>
    <property type="project" value="UniProtKB-KW"/>
</dbReference>
<dbReference type="GO" id="GO:0046654">
    <property type="term" value="P:tetrahydrofolate biosynthetic process"/>
    <property type="evidence" value="ECO:0007669"/>
    <property type="project" value="UniProtKB-UniPathway"/>
</dbReference>
<dbReference type="CDD" id="cd00209">
    <property type="entry name" value="DHFR"/>
    <property type="match status" value="1"/>
</dbReference>
<dbReference type="FunFam" id="3.40.430.10:FF:000001">
    <property type="entry name" value="Dihydrofolate reductase"/>
    <property type="match status" value="1"/>
</dbReference>
<dbReference type="Gene3D" id="3.40.430.10">
    <property type="entry name" value="Dihydrofolate Reductase, subunit A"/>
    <property type="match status" value="1"/>
</dbReference>
<dbReference type="InterPro" id="IPR012259">
    <property type="entry name" value="DHFR"/>
</dbReference>
<dbReference type="InterPro" id="IPR024072">
    <property type="entry name" value="DHFR-like_dom_sf"/>
</dbReference>
<dbReference type="InterPro" id="IPR017925">
    <property type="entry name" value="DHFR_CS"/>
</dbReference>
<dbReference type="InterPro" id="IPR001796">
    <property type="entry name" value="DHFR_dom"/>
</dbReference>
<dbReference type="PANTHER" id="PTHR48069">
    <property type="entry name" value="DIHYDROFOLATE REDUCTASE"/>
    <property type="match status" value="1"/>
</dbReference>
<dbReference type="PANTHER" id="PTHR48069:SF3">
    <property type="entry name" value="DIHYDROFOLATE REDUCTASE"/>
    <property type="match status" value="1"/>
</dbReference>
<dbReference type="Pfam" id="PF00186">
    <property type="entry name" value="DHFR_1"/>
    <property type="match status" value="1"/>
</dbReference>
<dbReference type="PIRSF" id="PIRSF000194">
    <property type="entry name" value="DHFR"/>
    <property type="match status" value="1"/>
</dbReference>
<dbReference type="PRINTS" id="PR00070">
    <property type="entry name" value="DHFR"/>
</dbReference>
<dbReference type="SUPFAM" id="SSF53597">
    <property type="entry name" value="Dihydrofolate reductase-like"/>
    <property type="match status" value="1"/>
</dbReference>
<dbReference type="PROSITE" id="PS00075">
    <property type="entry name" value="DHFR_1"/>
    <property type="match status" value="1"/>
</dbReference>
<dbReference type="PROSITE" id="PS51330">
    <property type="entry name" value="DHFR_2"/>
    <property type="match status" value="1"/>
</dbReference>